<protein>
    <recommendedName>
        <fullName evidence="5">Probable tetrachloroethene reductive dehalogenase membrane anchor protein</fullName>
    </recommendedName>
</protein>
<name>PCEB_DESHY</name>
<sequence length="105" mass="11843">MNIYDVLIWMALGMTALLIQYGIWRYLKGKGKDTIPLQICGFLANFFFIFALAWGYSSFSEREYQAIGMGFIFFGGTALIPAIITYRLANHPAKKIRESSDSISA</sequence>
<dbReference type="EMBL" id="AB070709">
    <property type="protein sequence ID" value="BAC00916.1"/>
    <property type="molecule type" value="Genomic_DNA"/>
</dbReference>
<dbReference type="EMBL" id="AY706985">
    <property type="protein sequence ID" value="AAW80324.1"/>
    <property type="molecule type" value="Genomic_DNA"/>
</dbReference>
<dbReference type="EMBL" id="AP008230">
    <property type="protein sequence ID" value="BAE84627.1"/>
    <property type="molecule type" value="Genomic_DNA"/>
</dbReference>
<dbReference type="RefSeq" id="WP_011460640.1">
    <property type="nucleotide sequence ID" value="NC_007907.1"/>
</dbReference>
<dbReference type="SMR" id="Q8L171"/>
<dbReference type="STRING" id="138119.DSY2838"/>
<dbReference type="KEGG" id="dsy:DSY2838"/>
<dbReference type="HOGENOM" id="CLU_2232152_0_0_9"/>
<dbReference type="Proteomes" id="UP000001946">
    <property type="component" value="Chromosome"/>
</dbReference>
<dbReference type="GO" id="GO:0005886">
    <property type="term" value="C:plasma membrane"/>
    <property type="evidence" value="ECO:0007669"/>
    <property type="project" value="UniProtKB-SubCell"/>
</dbReference>
<organism>
    <name type="scientific">Desulfitobacterium hafniense (strain Y51)</name>
    <dbReference type="NCBI Taxonomy" id="138119"/>
    <lineage>
        <taxon>Bacteria</taxon>
        <taxon>Bacillati</taxon>
        <taxon>Bacillota</taxon>
        <taxon>Clostridia</taxon>
        <taxon>Eubacteriales</taxon>
        <taxon>Desulfitobacteriaceae</taxon>
        <taxon>Desulfitobacterium</taxon>
    </lineage>
</organism>
<evidence type="ECO:0000255" key="1"/>
<evidence type="ECO:0000269" key="2">
    <source>
    </source>
</evidence>
<evidence type="ECO:0000269" key="3">
    <source>
    </source>
</evidence>
<evidence type="ECO:0000303" key="4">
    <source>
    </source>
</evidence>
<evidence type="ECO:0000305" key="5"/>
<evidence type="ECO:0000305" key="6">
    <source>
    </source>
</evidence>
<evidence type="ECO:0000312" key="7">
    <source>
        <dbReference type="EMBL" id="BAE84627.1"/>
    </source>
</evidence>
<feature type="chain" id="PRO_0000453977" description="Probable tetrachloroethene reductive dehalogenase membrane anchor protein">
    <location>
        <begin position="1"/>
        <end position="105"/>
    </location>
</feature>
<feature type="transmembrane region" description="Helical" evidence="1">
    <location>
        <begin position="3"/>
        <end position="23"/>
    </location>
</feature>
<feature type="transmembrane region" description="Helical" evidence="1">
    <location>
        <begin position="35"/>
        <end position="55"/>
    </location>
</feature>
<feature type="transmembrane region" description="Helical" evidence="1">
    <location>
        <begin position="66"/>
        <end position="86"/>
    </location>
</feature>
<proteinExistence type="evidence at transcript level"/>
<keyword id="KW-1003">Cell membrane</keyword>
<keyword id="KW-0472">Membrane</keyword>
<keyword id="KW-1185">Reference proteome</keyword>
<keyword id="KW-0812">Transmembrane</keyword>
<keyword id="KW-1133">Transmembrane helix</keyword>
<reference key="1">
    <citation type="journal article" date="2002" name="J. Bacteriol.">
        <title>Molecular characterization of the PceA reductive dehalogenase of desulfitobacterium sp. strain Y51.</title>
        <authorList>
            <person name="Suyama A."/>
            <person name="Yamashita M."/>
            <person name="Yoshino S."/>
            <person name="Furukawa K."/>
        </authorList>
    </citation>
    <scope>NUCLEOTIDE SEQUENCE [GENOMIC DNA]</scope>
    <scope>FUNCTION</scope>
    <source>
        <strain>Y51</strain>
    </source>
</reference>
<reference key="2">
    <citation type="journal article" date="2006" name="Appl. Microbiol. Biotechnol.">
        <title>Emergence of two types of nondechlorinating variants in the tetrachloroethene-halorespiring Desulfitobacterium sp. strain Y51.</title>
        <authorList>
            <person name="Futagami T."/>
            <person name="Tsuboi Y."/>
            <person name="Suyama A."/>
            <person name="Goto M."/>
            <person name="Furukawa K."/>
        </authorList>
    </citation>
    <scope>NUCLEOTIDE SEQUENCE [GENOMIC DNA]</scope>
    <scope>OPERON STRUCTURE</scope>
    <source>
        <strain>Y51</strain>
    </source>
</reference>
<reference key="3">
    <citation type="journal article" date="2006" name="J. Bacteriol.">
        <title>Complete genome sequence of the dehalorespiring bacterium Desulfitobacterium hafniense Y51 and comparison with Dehalococcoides ethenogenes 195.</title>
        <authorList>
            <person name="Nonaka H."/>
            <person name="Keresztes G."/>
            <person name="Shinoda Y."/>
            <person name="Ikenaga Y."/>
            <person name="Abe M."/>
            <person name="Naito K."/>
            <person name="Inatomi K."/>
            <person name="Furukawa K."/>
            <person name="Inui M."/>
            <person name="Yukawa H."/>
        </authorList>
    </citation>
    <scope>NUCLEOTIDE SEQUENCE [LARGE SCALE GENOMIC DNA]</scope>
    <source>
        <strain>Y51</strain>
    </source>
</reference>
<reference key="4">
    <citation type="journal article" date="2006" name="Appl. Environ. Microbiol.">
        <title>Effects of chloromethanes on growth of and deletion of the pce gene cluster in dehalorespiring Desulfitobacterium hafniense strain Y51.</title>
        <authorList>
            <person name="Futagami T."/>
            <person name="Yamaguchi T."/>
            <person name="Nakayama S."/>
            <person name="Goto M."/>
            <person name="Furukawa K."/>
        </authorList>
    </citation>
    <scope>INDUCTION</scope>
    <scope>DISRUPTION PHENOTYPE</scope>
    <source>
        <strain>Y51</strain>
    </source>
</reference>
<comment type="function">
    <text evidence="6">May act as a membrane anchor for the tetrachloroethene reductive dehalogenase PceA.</text>
</comment>
<comment type="subcellular location">
    <subcellularLocation>
        <location evidence="5">Cell membrane</location>
        <topology evidence="1">Multi-pass membrane protein</topology>
    </subcellularLocation>
</comment>
<comment type="induction">
    <text evidence="2 3">Located in the pceABCT gene cluster that is flanked by insertion sequences including transposase genes (PubMed:16133337). PceA, pceB and pceC are cotranscribed (PubMed:16957221).</text>
</comment>
<comment type="disruption phenotype">
    <text evidence="3">Chloroform inhibits the growth of the wild-type strain, but not the growth of the PCE-nondechlorinating small deletion (SD) and large deletion (LD) variants, where the former fails to transcribe the pceABC genes caused by a deletion of the promoter and the latter lost the entire pceABCT gene cluster.</text>
</comment>
<comment type="similarity">
    <text evidence="5">Belongs to the PceB family.</text>
</comment>
<accession>Q8L171</accession>
<gene>
    <name evidence="4" type="primary">pceB</name>
    <name evidence="7" type="ordered locus">DSY2838</name>
</gene>